<dbReference type="EMBL" id="AM933173">
    <property type="protein sequence ID" value="CAR36672.1"/>
    <property type="molecule type" value="Genomic_DNA"/>
</dbReference>
<dbReference type="RefSeq" id="WP_000042502.1">
    <property type="nucleotide sequence ID" value="NC_011274.1"/>
</dbReference>
<dbReference type="SMR" id="B5R765"/>
<dbReference type="KEGG" id="seg:SG0776"/>
<dbReference type="HOGENOM" id="CLU_009621_2_1_6"/>
<dbReference type="Proteomes" id="UP000008321">
    <property type="component" value="Chromosome"/>
</dbReference>
<dbReference type="GO" id="GO:0005737">
    <property type="term" value="C:cytoplasm"/>
    <property type="evidence" value="ECO:0007669"/>
    <property type="project" value="UniProtKB-SubCell"/>
</dbReference>
<dbReference type="GO" id="GO:0009380">
    <property type="term" value="C:excinuclease repair complex"/>
    <property type="evidence" value="ECO:0007669"/>
    <property type="project" value="InterPro"/>
</dbReference>
<dbReference type="GO" id="GO:0005524">
    <property type="term" value="F:ATP binding"/>
    <property type="evidence" value="ECO:0007669"/>
    <property type="project" value="UniProtKB-UniRule"/>
</dbReference>
<dbReference type="GO" id="GO:0016887">
    <property type="term" value="F:ATP hydrolysis activity"/>
    <property type="evidence" value="ECO:0007669"/>
    <property type="project" value="InterPro"/>
</dbReference>
<dbReference type="GO" id="GO:0003677">
    <property type="term" value="F:DNA binding"/>
    <property type="evidence" value="ECO:0007669"/>
    <property type="project" value="UniProtKB-UniRule"/>
</dbReference>
<dbReference type="GO" id="GO:0009381">
    <property type="term" value="F:excinuclease ABC activity"/>
    <property type="evidence" value="ECO:0007669"/>
    <property type="project" value="UniProtKB-UniRule"/>
</dbReference>
<dbReference type="GO" id="GO:0004386">
    <property type="term" value="F:helicase activity"/>
    <property type="evidence" value="ECO:0007669"/>
    <property type="project" value="UniProtKB-KW"/>
</dbReference>
<dbReference type="GO" id="GO:0006289">
    <property type="term" value="P:nucleotide-excision repair"/>
    <property type="evidence" value="ECO:0007669"/>
    <property type="project" value="UniProtKB-UniRule"/>
</dbReference>
<dbReference type="GO" id="GO:0009432">
    <property type="term" value="P:SOS response"/>
    <property type="evidence" value="ECO:0007669"/>
    <property type="project" value="UniProtKB-UniRule"/>
</dbReference>
<dbReference type="CDD" id="cd17916">
    <property type="entry name" value="DEXHc_UvrB"/>
    <property type="match status" value="1"/>
</dbReference>
<dbReference type="CDD" id="cd18790">
    <property type="entry name" value="SF2_C_UvrB"/>
    <property type="match status" value="1"/>
</dbReference>
<dbReference type="FunFam" id="3.40.50.300:FF:000257">
    <property type="entry name" value="UvrABC system protein B"/>
    <property type="match status" value="1"/>
</dbReference>
<dbReference type="FunFam" id="3.40.50.300:FF:000401">
    <property type="entry name" value="UvrABC system protein B"/>
    <property type="match status" value="1"/>
</dbReference>
<dbReference type="FunFam" id="3.40.50.300:FF:000477">
    <property type="entry name" value="UvrABC system protein B"/>
    <property type="match status" value="1"/>
</dbReference>
<dbReference type="Gene3D" id="6.10.140.240">
    <property type="match status" value="1"/>
</dbReference>
<dbReference type="Gene3D" id="3.40.50.300">
    <property type="entry name" value="P-loop containing nucleotide triphosphate hydrolases"/>
    <property type="match status" value="3"/>
</dbReference>
<dbReference type="Gene3D" id="4.10.860.10">
    <property type="entry name" value="UVR domain"/>
    <property type="match status" value="1"/>
</dbReference>
<dbReference type="HAMAP" id="MF_00204">
    <property type="entry name" value="UvrB"/>
    <property type="match status" value="1"/>
</dbReference>
<dbReference type="InterPro" id="IPR006935">
    <property type="entry name" value="Helicase/UvrB_N"/>
</dbReference>
<dbReference type="InterPro" id="IPR014001">
    <property type="entry name" value="Helicase_ATP-bd"/>
</dbReference>
<dbReference type="InterPro" id="IPR001650">
    <property type="entry name" value="Helicase_C-like"/>
</dbReference>
<dbReference type="InterPro" id="IPR027417">
    <property type="entry name" value="P-loop_NTPase"/>
</dbReference>
<dbReference type="InterPro" id="IPR001943">
    <property type="entry name" value="UVR_dom"/>
</dbReference>
<dbReference type="InterPro" id="IPR036876">
    <property type="entry name" value="UVR_dom_sf"/>
</dbReference>
<dbReference type="InterPro" id="IPR004807">
    <property type="entry name" value="UvrB"/>
</dbReference>
<dbReference type="InterPro" id="IPR041471">
    <property type="entry name" value="UvrB_inter"/>
</dbReference>
<dbReference type="InterPro" id="IPR024759">
    <property type="entry name" value="UvrB_YAD/RRR_dom"/>
</dbReference>
<dbReference type="NCBIfam" id="NF003673">
    <property type="entry name" value="PRK05298.1"/>
    <property type="match status" value="1"/>
</dbReference>
<dbReference type="NCBIfam" id="TIGR00631">
    <property type="entry name" value="uvrb"/>
    <property type="match status" value="1"/>
</dbReference>
<dbReference type="PANTHER" id="PTHR24029">
    <property type="entry name" value="UVRABC SYSTEM PROTEIN B"/>
    <property type="match status" value="1"/>
</dbReference>
<dbReference type="PANTHER" id="PTHR24029:SF0">
    <property type="entry name" value="UVRABC SYSTEM PROTEIN B"/>
    <property type="match status" value="1"/>
</dbReference>
<dbReference type="Pfam" id="PF00271">
    <property type="entry name" value="Helicase_C"/>
    <property type="match status" value="1"/>
</dbReference>
<dbReference type="Pfam" id="PF04851">
    <property type="entry name" value="ResIII"/>
    <property type="match status" value="1"/>
</dbReference>
<dbReference type="Pfam" id="PF02151">
    <property type="entry name" value="UVR"/>
    <property type="match status" value="1"/>
</dbReference>
<dbReference type="Pfam" id="PF12344">
    <property type="entry name" value="UvrB"/>
    <property type="match status" value="1"/>
</dbReference>
<dbReference type="Pfam" id="PF17757">
    <property type="entry name" value="UvrB_inter"/>
    <property type="match status" value="1"/>
</dbReference>
<dbReference type="SMART" id="SM00487">
    <property type="entry name" value="DEXDc"/>
    <property type="match status" value="1"/>
</dbReference>
<dbReference type="SMART" id="SM00490">
    <property type="entry name" value="HELICc"/>
    <property type="match status" value="1"/>
</dbReference>
<dbReference type="SUPFAM" id="SSF46600">
    <property type="entry name" value="C-terminal UvrC-binding domain of UvrB"/>
    <property type="match status" value="1"/>
</dbReference>
<dbReference type="SUPFAM" id="SSF52540">
    <property type="entry name" value="P-loop containing nucleoside triphosphate hydrolases"/>
    <property type="match status" value="2"/>
</dbReference>
<dbReference type="PROSITE" id="PS51192">
    <property type="entry name" value="HELICASE_ATP_BIND_1"/>
    <property type="match status" value="1"/>
</dbReference>
<dbReference type="PROSITE" id="PS51194">
    <property type="entry name" value="HELICASE_CTER"/>
    <property type="match status" value="1"/>
</dbReference>
<dbReference type="PROSITE" id="PS50151">
    <property type="entry name" value="UVR"/>
    <property type="match status" value="1"/>
</dbReference>
<feature type="chain" id="PRO_1000099563" description="UvrABC system protein B">
    <location>
        <begin position="1"/>
        <end position="673"/>
    </location>
</feature>
<feature type="domain" description="Helicase ATP-binding" evidence="1">
    <location>
        <begin position="26"/>
        <end position="183"/>
    </location>
</feature>
<feature type="domain" description="Helicase C-terminal" evidence="1">
    <location>
        <begin position="431"/>
        <end position="597"/>
    </location>
</feature>
<feature type="domain" description="UVR" evidence="1">
    <location>
        <begin position="633"/>
        <end position="668"/>
    </location>
</feature>
<feature type="short sequence motif" description="Beta-hairpin">
    <location>
        <begin position="92"/>
        <end position="115"/>
    </location>
</feature>
<feature type="binding site" evidence="1">
    <location>
        <begin position="39"/>
        <end position="46"/>
    </location>
    <ligand>
        <name>ATP</name>
        <dbReference type="ChEBI" id="CHEBI:30616"/>
    </ligand>
</feature>
<gene>
    <name evidence="1" type="primary">uvrB</name>
    <name type="ordered locus">SG0776</name>
</gene>
<reference key="1">
    <citation type="journal article" date="2008" name="Genome Res.">
        <title>Comparative genome analysis of Salmonella enteritidis PT4 and Salmonella gallinarum 287/91 provides insights into evolutionary and host adaptation pathways.</title>
        <authorList>
            <person name="Thomson N.R."/>
            <person name="Clayton D.J."/>
            <person name="Windhorst D."/>
            <person name="Vernikos G."/>
            <person name="Davidson S."/>
            <person name="Churcher C."/>
            <person name="Quail M.A."/>
            <person name="Stevens M."/>
            <person name="Jones M.A."/>
            <person name="Watson M."/>
            <person name="Barron A."/>
            <person name="Layton A."/>
            <person name="Pickard D."/>
            <person name="Kingsley R.A."/>
            <person name="Bignell A."/>
            <person name="Clark L."/>
            <person name="Harris B."/>
            <person name="Ormond D."/>
            <person name="Abdellah Z."/>
            <person name="Brooks K."/>
            <person name="Cherevach I."/>
            <person name="Chillingworth T."/>
            <person name="Woodward J."/>
            <person name="Norberczak H."/>
            <person name="Lord A."/>
            <person name="Arrowsmith C."/>
            <person name="Jagels K."/>
            <person name="Moule S."/>
            <person name="Mungall K."/>
            <person name="Saunders M."/>
            <person name="Whitehead S."/>
            <person name="Chabalgoity J.A."/>
            <person name="Maskell D."/>
            <person name="Humphreys T."/>
            <person name="Roberts M."/>
            <person name="Barrow P.A."/>
            <person name="Dougan G."/>
            <person name="Parkhill J."/>
        </authorList>
    </citation>
    <scope>NUCLEOTIDE SEQUENCE [LARGE SCALE GENOMIC DNA]</scope>
    <source>
        <strain>287/91 / NCTC 13346</strain>
    </source>
</reference>
<evidence type="ECO:0000255" key="1">
    <source>
        <dbReference type="HAMAP-Rule" id="MF_00204"/>
    </source>
</evidence>
<proteinExistence type="inferred from homology"/>
<keyword id="KW-0067">ATP-binding</keyword>
<keyword id="KW-0963">Cytoplasm</keyword>
<keyword id="KW-0227">DNA damage</keyword>
<keyword id="KW-0228">DNA excision</keyword>
<keyword id="KW-0234">DNA repair</keyword>
<keyword id="KW-0267">Excision nuclease</keyword>
<keyword id="KW-0347">Helicase</keyword>
<keyword id="KW-0378">Hydrolase</keyword>
<keyword id="KW-0547">Nucleotide-binding</keyword>
<keyword id="KW-0742">SOS response</keyword>
<organism>
    <name type="scientific">Salmonella gallinarum (strain 287/91 / NCTC 13346)</name>
    <dbReference type="NCBI Taxonomy" id="550538"/>
    <lineage>
        <taxon>Bacteria</taxon>
        <taxon>Pseudomonadati</taxon>
        <taxon>Pseudomonadota</taxon>
        <taxon>Gammaproteobacteria</taxon>
        <taxon>Enterobacterales</taxon>
        <taxon>Enterobacteriaceae</taxon>
        <taxon>Salmonella</taxon>
    </lineage>
</organism>
<comment type="function">
    <text evidence="1">The UvrABC repair system catalyzes the recognition and processing of DNA lesions. A damage recognition complex composed of 2 UvrA and 2 UvrB subunits scans DNA for abnormalities. Upon binding of the UvrA(2)B(2) complex to a putative damaged site, the DNA wraps around one UvrB monomer. DNA wrap is dependent on ATP binding by UvrB and probably causes local melting of the DNA helix, facilitating insertion of UvrB beta-hairpin between the DNA strands. Then UvrB probes one DNA strand for the presence of a lesion. If a lesion is found the UvrA subunits dissociate and the UvrB-DNA preincision complex is formed. This complex is subsequently bound by UvrC and the second UvrB is released. If no lesion is found, the DNA wraps around the other UvrB subunit that will check the other stand for damage.</text>
</comment>
<comment type="subunit">
    <text evidence="1">Forms a heterotetramer with UvrA during the search for lesions. Interacts with UvrC in an incision complex.</text>
</comment>
<comment type="subcellular location">
    <subcellularLocation>
        <location evidence="1">Cytoplasm</location>
    </subcellularLocation>
</comment>
<comment type="domain">
    <text evidence="1">The beta-hairpin motif is involved in DNA binding.</text>
</comment>
<comment type="similarity">
    <text evidence="1">Belongs to the UvrB family.</text>
</comment>
<name>UVRB_SALG2</name>
<sequence>MSKPFKLNSAFKPSGDQPDAIRRLEEGLEDGLAHQTLLGVTGSGKTFTIANVIADLQRPTMVLAPNKTLAAQLYGEMKEFFPENAVEYFVSYYDYYQPEAYVPSSDTFIEKDASVNEHIEQMRLSATKALLERRDVVVVASVSAIYGLGDPDLYLKMMLHLTVGMLIDQRAILRRLAELQYTRNDQAFQRGTFRVRGEVIDIFPAESDDIALRVELFDEEVERLSLFDPLTGQVESTVPRYTIYPKTHYVTPRERILQAMEEIKDELADRRKVLLANNKLLEEQRLSQRTQFDLEMMNELGYCSGIENYSRFLSGRGPGEPPPTLFDYLPADGLLVVDESHVTIPQIGGMYRGDRARKETLVEYGFRLPSALDNRPLKFEEFEALAPQTIYVSATPGNYELEKSGDEVVDQVVRPTGLLDPIIEVRPVATQVDDLLSEIRQRAAINERVLVTTLTKRMAEDLTEYLEEHGERVRYLHSDIDTVERMEIIRDLRLGEFDVLVGINLLREGLDMPEVSLVAILDADKEGFLRSERSLIQTIGRAARNVNGKAILYGDKITPSMAKAIGETERRREKQQKYNEEHGITPQGLNKKVVDILALGQNIAKTKAKGKGKGRSTAKAGIVELDMTPKALQQKIHELEGQMMQHAQNLEFEEAAQIRDQLHQLRELFIAAS</sequence>
<protein>
    <recommendedName>
        <fullName evidence="1">UvrABC system protein B</fullName>
        <shortName evidence="1">Protein UvrB</shortName>
    </recommendedName>
    <alternativeName>
        <fullName evidence="1">Excinuclease ABC subunit B</fullName>
    </alternativeName>
</protein>
<accession>B5R765</accession>